<proteinExistence type="inferred from homology"/>
<name>SYL_STRP1</name>
<organism>
    <name type="scientific">Streptococcus pyogenes serotype M1</name>
    <dbReference type="NCBI Taxonomy" id="301447"/>
    <lineage>
        <taxon>Bacteria</taxon>
        <taxon>Bacillati</taxon>
        <taxon>Bacillota</taxon>
        <taxon>Bacilli</taxon>
        <taxon>Lactobacillales</taxon>
        <taxon>Streptococcaceae</taxon>
        <taxon>Streptococcus</taxon>
    </lineage>
</organism>
<accession>Q9A1P0</accession>
<accession>Q491F2</accession>
<reference key="1">
    <citation type="journal article" date="2001" name="Proc. Natl. Acad. Sci. U.S.A.">
        <title>Complete genome sequence of an M1 strain of Streptococcus pyogenes.</title>
        <authorList>
            <person name="Ferretti J.J."/>
            <person name="McShan W.M."/>
            <person name="Ajdic D.J."/>
            <person name="Savic D.J."/>
            <person name="Savic G."/>
            <person name="Lyon K."/>
            <person name="Primeaux C."/>
            <person name="Sezate S."/>
            <person name="Suvorov A.N."/>
            <person name="Kenton S."/>
            <person name="Lai H.S."/>
            <person name="Lin S.P."/>
            <person name="Qian Y."/>
            <person name="Jia H.G."/>
            <person name="Najar F.Z."/>
            <person name="Ren Q."/>
            <person name="Zhu H."/>
            <person name="Song L."/>
            <person name="White J."/>
            <person name="Yuan X."/>
            <person name="Clifton S.W."/>
            <person name="Roe B.A."/>
            <person name="McLaughlin R.E."/>
        </authorList>
    </citation>
    <scope>NUCLEOTIDE SEQUENCE [LARGE SCALE GENOMIC DNA]</scope>
    <source>
        <strain>ATCC 700294 / SF370 / Serotype M1</strain>
    </source>
</reference>
<reference key="2">
    <citation type="journal article" date="2005" name="J. Infect. Dis.">
        <title>Evolutionary origin and emergence of a highly successful clone of serotype M1 group A Streptococcus involved multiple horizontal gene transfer events.</title>
        <authorList>
            <person name="Sumby P."/>
            <person name="Porcella S.F."/>
            <person name="Madrigal A.G."/>
            <person name="Barbian K.D."/>
            <person name="Virtaneva K."/>
            <person name="Ricklefs S.M."/>
            <person name="Sturdevant D.E."/>
            <person name="Graham M.R."/>
            <person name="Vuopio-Varkila J."/>
            <person name="Hoe N.P."/>
            <person name="Musser J.M."/>
        </authorList>
    </citation>
    <scope>NUCLEOTIDE SEQUENCE [LARGE SCALE GENOMIC DNA]</scope>
    <source>
        <strain>ATCC BAA-947 / MGAS5005 / Serotype M1</strain>
    </source>
</reference>
<gene>
    <name evidence="1" type="primary">leuS</name>
    <name type="ordered locus">SPy_0173</name>
    <name type="ordered locus">M5005_Spy0147</name>
</gene>
<comment type="catalytic activity">
    <reaction evidence="1">
        <text>tRNA(Leu) + L-leucine + ATP = L-leucyl-tRNA(Leu) + AMP + diphosphate</text>
        <dbReference type="Rhea" id="RHEA:11688"/>
        <dbReference type="Rhea" id="RHEA-COMP:9613"/>
        <dbReference type="Rhea" id="RHEA-COMP:9622"/>
        <dbReference type="ChEBI" id="CHEBI:30616"/>
        <dbReference type="ChEBI" id="CHEBI:33019"/>
        <dbReference type="ChEBI" id="CHEBI:57427"/>
        <dbReference type="ChEBI" id="CHEBI:78442"/>
        <dbReference type="ChEBI" id="CHEBI:78494"/>
        <dbReference type="ChEBI" id="CHEBI:456215"/>
        <dbReference type="EC" id="6.1.1.4"/>
    </reaction>
</comment>
<comment type="subcellular location">
    <subcellularLocation>
        <location evidence="1">Cytoplasm</location>
    </subcellularLocation>
</comment>
<comment type="similarity">
    <text evidence="1">Belongs to the class-I aminoacyl-tRNA synthetase family.</text>
</comment>
<comment type="sequence caution" evidence="2">
    <conflict type="erroneous initiation">
        <sequence resource="EMBL-CDS" id="AAZ50766"/>
    </conflict>
</comment>
<keyword id="KW-0030">Aminoacyl-tRNA synthetase</keyword>
<keyword id="KW-0067">ATP-binding</keyword>
<keyword id="KW-0963">Cytoplasm</keyword>
<keyword id="KW-0436">Ligase</keyword>
<keyword id="KW-0547">Nucleotide-binding</keyword>
<keyword id="KW-0648">Protein biosynthesis</keyword>
<keyword id="KW-1185">Reference proteome</keyword>
<dbReference type="EC" id="6.1.1.4" evidence="1"/>
<dbReference type="EMBL" id="AE004092">
    <property type="protein sequence ID" value="AAK33273.1"/>
    <property type="molecule type" value="Genomic_DNA"/>
</dbReference>
<dbReference type="EMBL" id="CP000017">
    <property type="protein sequence ID" value="AAZ50766.1"/>
    <property type="status" value="ALT_INIT"/>
    <property type="molecule type" value="Genomic_DNA"/>
</dbReference>
<dbReference type="RefSeq" id="NP_268552.1">
    <property type="nucleotide sequence ID" value="NC_002737.2"/>
</dbReference>
<dbReference type="SMR" id="Q9A1P0"/>
<dbReference type="PaxDb" id="1314-HKU360_00192"/>
<dbReference type="KEGG" id="spy:SPy_0173"/>
<dbReference type="KEGG" id="spz:M5005_Spy0147"/>
<dbReference type="PATRIC" id="fig|160490.10.peg.151"/>
<dbReference type="HOGENOM" id="CLU_004427_0_0_9"/>
<dbReference type="OMA" id="GIEHACM"/>
<dbReference type="Proteomes" id="UP000000750">
    <property type="component" value="Chromosome"/>
</dbReference>
<dbReference type="GO" id="GO:0005829">
    <property type="term" value="C:cytosol"/>
    <property type="evidence" value="ECO:0007669"/>
    <property type="project" value="TreeGrafter"/>
</dbReference>
<dbReference type="GO" id="GO:0002161">
    <property type="term" value="F:aminoacyl-tRNA deacylase activity"/>
    <property type="evidence" value="ECO:0007669"/>
    <property type="project" value="InterPro"/>
</dbReference>
<dbReference type="GO" id="GO:0005524">
    <property type="term" value="F:ATP binding"/>
    <property type="evidence" value="ECO:0007669"/>
    <property type="project" value="UniProtKB-UniRule"/>
</dbReference>
<dbReference type="GO" id="GO:0004823">
    <property type="term" value="F:leucine-tRNA ligase activity"/>
    <property type="evidence" value="ECO:0007669"/>
    <property type="project" value="UniProtKB-UniRule"/>
</dbReference>
<dbReference type="GO" id="GO:0006429">
    <property type="term" value="P:leucyl-tRNA aminoacylation"/>
    <property type="evidence" value="ECO:0007669"/>
    <property type="project" value="UniProtKB-UniRule"/>
</dbReference>
<dbReference type="CDD" id="cd07958">
    <property type="entry name" value="Anticodon_Ia_Leu_BEm"/>
    <property type="match status" value="1"/>
</dbReference>
<dbReference type="CDD" id="cd00812">
    <property type="entry name" value="LeuRS_core"/>
    <property type="match status" value="1"/>
</dbReference>
<dbReference type="FunFam" id="1.10.730.10:FF:000012">
    <property type="entry name" value="Leucine--tRNA ligase"/>
    <property type="match status" value="1"/>
</dbReference>
<dbReference type="FunFam" id="3.40.50.620:FF:000056">
    <property type="entry name" value="Leucine--tRNA ligase"/>
    <property type="match status" value="1"/>
</dbReference>
<dbReference type="FunFam" id="3.40.50.620:FF:000077">
    <property type="entry name" value="Leucine--tRNA ligase"/>
    <property type="match status" value="1"/>
</dbReference>
<dbReference type="FunFam" id="1.10.730.10:FF:000011">
    <property type="entry name" value="Leucine--tRNA ligase chloroplastic/mitochondrial"/>
    <property type="match status" value="1"/>
</dbReference>
<dbReference type="Gene3D" id="3.40.50.620">
    <property type="entry name" value="HUPs"/>
    <property type="match status" value="2"/>
</dbReference>
<dbReference type="Gene3D" id="1.10.730.10">
    <property type="entry name" value="Isoleucyl-tRNA Synthetase, Domain 1"/>
    <property type="match status" value="1"/>
</dbReference>
<dbReference type="Gene3D" id="3.90.740.10">
    <property type="entry name" value="Valyl/Leucyl/Isoleucyl-tRNA synthetase, editing domain"/>
    <property type="match status" value="1"/>
</dbReference>
<dbReference type="HAMAP" id="MF_00049_B">
    <property type="entry name" value="Leu_tRNA_synth_B"/>
    <property type="match status" value="1"/>
</dbReference>
<dbReference type="InterPro" id="IPR001412">
    <property type="entry name" value="aa-tRNA-synth_I_CS"/>
</dbReference>
<dbReference type="InterPro" id="IPR002300">
    <property type="entry name" value="aa-tRNA-synth_Ia"/>
</dbReference>
<dbReference type="InterPro" id="IPR002302">
    <property type="entry name" value="Leu-tRNA-ligase"/>
</dbReference>
<dbReference type="InterPro" id="IPR025709">
    <property type="entry name" value="Leu_tRNA-synth_edit"/>
</dbReference>
<dbReference type="InterPro" id="IPR013155">
    <property type="entry name" value="M/V/L/I-tRNA-synth_anticd-bd"/>
</dbReference>
<dbReference type="InterPro" id="IPR015413">
    <property type="entry name" value="Methionyl/Leucyl_tRNA_Synth"/>
</dbReference>
<dbReference type="InterPro" id="IPR014729">
    <property type="entry name" value="Rossmann-like_a/b/a_fold"/>
</dbReference>
<dbReference type="InterPro" id="IPR009080">
    <property type="entry name" value="tRNAsynth_Ia_anticodon-bd"/>
</dbReference>
<dbReference type="InterPro" id="IPR009008">
    <property type="entry name" value="Val/Leu/Ile-tRNA-synth_edit"/>
</dbReference>
<dbReference type="NCBIfam" id="TIGR00396">
    <property type="entry name" value="leuS_bact"/>
    <property type="match status" value="1"/>
</dbReference>
<dbReference type="PANTHER" id="PTHR43740:SF2">
    <property type="entry name" value="LEUCINE--TRNA LIGASE, MITOCHONDRIAL"/>
    <property type="match status" value="1"/>
</dbReference>
<dbReference type="PANTHER" id="PTHR43740">
    <property type="entry name" value="LEUCYL-TRNA SYNTHETASE"/>
    <property type="match status" value="1"/>
</dbReference>
<dbReference type="Pfam" id="PF08264">
    <property type="entry name" value="Anticodon_1"/>
    <property type="match status" value="1"/>
</dbReference>
<dbReference type="Pfam" id="PF00133">
    <property type="entry name" value="tRNA-synt_1"/>
    <property type="match status" value="2"/>
</dbReference>
<dbReference type="Pfam" id="PF13603">
    <property type="entry name" value="tRNA-synt_1_2"/>
    <property type="match status" value="1"/>
</dbReference>
<dbReference type="Pfam" id="PF09334">
    <property type="entry name" value="tRNA-synt_1g"/>
    <property type="match status" value="1"/>
</dbReference>
<dbReference type="PRINTS" id="PR00985">
    <property type="entry name" value="TRNASYNTHLEU"/>
</dbReference>
<dbReference type="SUPFAM" id="SSF47323">
    <property type="entry name" value="Anticodon-binding domain of a subclass of class I aminoacyl-tRNA synthetases"/>
    <property type="match status" value="1"/>
</dbReference>
<dbReference type="SUPFAM" id="SSF52374">
    <property type="entry name" value="Nucleotidylyl transferase"/>
    <property type="match status" value="1"/>
</dbReference>
<dbReference type="SUPFAM" id="SSF50677">
    <property type="entry name" value="ValRS/IleRS/LeuRS editing domain"/>
    <property type="match status" value="1"/>
</dbReference>
<dbReference type="PROSITE" id="PS00178">
    <property type="entry name" value="AA_TRNA_LIGASE_I"/>
    <property type="match status" value="1"/>
</dbReference>
<sequence length="833" mass="93816">MTFYDHTAIEPKWQAFWADNHTFKTGTDASKPKFYALDMFPYPSGAGLHVGHPEGYTATDILSRFKRAQGHNILHPMGWDAFGLPAEQYAMDTGNDPAEFTAENIANFKRQINALGFSYDWDREVNTTDPNYYKWTQWIFTKLYEKGLAYEAEVPVNWVEELGTAIANEEVLPDGTSERGGYPVVRKPMRQWMLKITAYAERLLEDLEEVDWPESIKDMQRNWIGKSTGANVTFKVKDTDKDFTVFTTRPDTLFGATYAVLAPEHALVDAITTADQAEAVAKYKRQASLKSDLARTDLAKEKTGVWTGAYAINPVNGNEMPVWIADYVLASYGTGAIMAVPAHDERDWEFAKQFKLDIIPVLEGGNVEEAAFTEDGLHINSGFLDGLDKASAIAKMVEWLEAEGVGNEKVTYRLRDWLFSRQRYWGEPIPIIHWEDGTSTAVPESELPLVLPVTKDIRPSGTGESPLANVTDWLEVTREDGVKGRRETNTMPQWAGSSWYYLRYIDPHNTEKLADEELLKQWLPVDIYVGGAEHAVLHLLYARFWHKVLYDLGVVPTKEPFQKLFNQGMILGTSYRDSRGALVATDKVEKRDGSFFHVETGEELEQAPAKMSKSLKNVVNPDDVVEQYGADTLRVYEMFMGPLDASIAWSEEGLEGSRKFLDRVYRLITTKEITEENSGALDKVYNETVKAVTEQVDQMKFNTAIAQLMVFVNAANKEDKLFSDYAKGFVQLIAPFAPHLGEELWQALTASGESISYVPWPSYDESKLVENDVEIVVQIKGKVKAKLVVAKDLSREELQEVALANEKVQAEIAGKDIIKVIAVPNKLVNIVIK</sequence>
<protein>
    <recommendedName>
        <fullName evidence="1">Leucine--tRNA ligase</fullName>
        <ecNumber evidence="1">6.1.1.4</ecNumber>
    </recommendedName>
    <alternativeName>
        <fullName evidence="1">Leucyl-tRNA synthetase</fullName>
        <shortName evidence="1">LeuRS</shortName>
    </alternativeName>
</protein>
<evidence type="ECO:0000255" key="1">
    <source>
        <dbReference type="HAMAP-Rule" id="MF_00049"/>
    </source>
</evidence>
<evidence type="ECO:0000305" key="2"/>
<feature type="chain" id="PRO_0000152097" description="Leucine--tRNA ligase">
    <location>
        <begin position="1"/>
        <end position="833"/>
    </location>
</feature>
<feature type="short sequence motif" description="'HIGH' region">
    <location>
        <begin position="41"/>
        <end position="52"/>
    </location>
</feature>
<feature type="short sequence motif" description="'KMSKS' region">
    <location>
        <begin position="610"/>
        <end position="614"/>
    </location>
</feature>
<feature type="binding site" evidence="1">
    <location>
        <position position="613"/>
    </location>
    <ligand>
        <name>ATP</name>
        <dbReference type="ChEBI" id="CHEBI:30616"/>
    </ligand>
</feature>
<feature type="sequence conflict" description="In Ref. 2; AAZ50766." evidence="2" ref="2">
    <original>I</original>
    <variation>V</variation>
    <location>
        <position position="73"/>
    </location>
</feature>
<feature type="sequence conflict" description="In Ref. 2; AAZ50766." evidence="2" ref="2">
    <original>A</original>
    <variation>S</variation>
    <location>
        <position position="274"/>
    </location>
</feature>
<feature type="sequence conflict" description="In Ref. 2; AAZ50766." evidence="2" ref="2">
    <original>K</original>
    <variation>D</variation>
    <location>
        <position position="282"/>
    </location>
</feature>
<feature type="sequence conflict" description="In Ref. 2; AAZ50766." evidence="2" ref="2">
    <original>A</original>
    <variation>S</variation>
    <location>
        <position position="309"/>
    </location>
</feature>
<feature type="sequence conflict" description="In Ref. 2; AAZ50766." evidence="2" ref="2">
    <original>N</original>
    <variation>K</variation>
    <location>
        <position position="318"/>
    </location>
</feature>
<feature type="sequence conflict" description="In Ref. 2; AAZ50766." evidence="2" ref="2">
    <original>K</original>
    <variation>N</variation>
    <location>
        <position position="355"/>
    </location>
</feature>
<feature type="sequence conflict" description="In Ref. 2; AAZ50766." evidence="2" ref="2">
    <original>G</original>
    <variation>D</variation>
    <location>
        <position position="382"/>
    </location>
</feature>
<feature type="sequence conflict" description="In Ref. 2; AAZ50766." evidence="2" ref="2">
    <original>K</original>
    <variation>N</variation>
    <location>
        <position position="409"/>
    </location>
</feature>